<accession>P99105</accession>
<accession>Q99WI8</accession>
<name>GUAA_STAAN</name>
<comment type="function">
    <text evidence="1">Catalyzes the synthesis of GMP from XMP.</text>
</comment>
<comment type="catalytic activity">
    <reaction evidence="1">
        <text>XMP + L-glutamine + ATP + H2O = GMP + L-glutamate + AMP + diphosphate + 2 H(+)</text>
        <dbReference type="Rhea" id="RHEA:11680"/>
        <dbReference type="ChEBI" id="CHEBI:15377"/>
        <dbReference type="ChEBI" id="CHEBI:15378"/>
        <dbReference type="ChEBI" id="CHEBI:29985"/>
        <dbReference type="ChEBI" id="CHEBI:30616"/>
        <dbReference type="ChEBI" id="CHEBI:33019"/>
        <dbReference type="ChEBI" id="CHEBI:57464"/>
        <dbReference type="ChEBI" id="CHEBI:58115"/>
        <dbReference type="ChEBI" id="CHEBI:58359"/>
        <dbReference type="ChEBI" id="CHEBI:456215"/>
        <dbReference type="EC" id="6.3.5.2"/>
    </reaction>
</comment>
<comment type="pathway">
    <text evidence="1">Purine metabolism; GMP biosynthesis; GMP from XMP (L-Gln route): step 1/1.</text>
</comment>
<comment type="subunit">
    <text evidence="1">Homodimer.</text>
</comment>
<evidence type="ECO:0000255" key="1">
    <source>
        <dbReference type="HAMAP-Rule" id="MF_00344"/>
    </source>
</evidence>
<protein>
    <recommendedName>
        <fullName evidence="1">GMP synthase [glutamine-hydrolyzing]</fullName>
        <ecNumber evidence="1">6.3.5.2</ecNumber>
    </recommendedName>
    <alternativeName>
        <fullName evidence="1">GMP synthetase</fullName>
    </alternativeName>
    <alternativeName>
        <fullName evidence="1">Glutamine amidotransferase</fullName>
    </alternativeName>
</protein>
<keyword id="KW-0067">ATP-binding</keyword>
<keyword id="KW-0315">Glutamine amidotransferase</keyword>
<keyword id="KW-0332">GMP biosynthesis</keyword>
<keyword id="KW-0436">Ligase</keyword>
<keyword id="KW-0547">Nucleotide-binding</keyword>
<keyword id="KW-0658">Purine biosynthesis</keyword>
<reference key="1">
    <citation type="journal article" date="2001" name="Lancet">
        <title>Whole genome sequencing of meticillin-resistant Staphylococcus aureus.</title>
        <authorList>
            <person name="Kuroda M."/>
            <person name="Ohta T."/>
            <person name="Uchiyama I."/>
            <person name="Baba T."/>
            <person name="Yuzawa H."/>
            <person name="Kobayashi I."/>
            <person name="Cui L."/>
            <person name="Oguchi A."/>
            <person name="Aoki K."/>
            <person name="Nagai Y."/>
            <person name="Lian J.-Q."/>
            <person name="Ito T."/>
            <person name="Kanamori M."/>
            <person name="Matsumaru H."/>
            <person name="Maruyama A."/>
            <person name="Murakami H."/>
            <person name="Hosoyama A."/>
            <person name="Mizutani-Ui Y."/>
            <person name="Takahashi N.K."/>
            <person name="Sawano T."/>
            <person name="Inoue R."/>
            <person name="Kaito C."/>
            <person name="Sekimizu K."/>
            <person name="Hirakawa H."/>
            <person name="Kuhara S."/>
            <person name="Goto S."/>
            <person name="Yabuzaki J."/>
            <person name="Kanehisa M."/>
            <person name="Yamashita A."/>
            <person name="Oshima K."/>
            <person name="Furuya K."/>
            <person name="Yoshino C."/>
            <person name="Shiba T."/>
            <person name="Hattori M."/>
            <person name="Ogasawara N."/>
            <person name="Hayashi H."/>
            <person name="Hiramatsu K."/>
        </authorList>
    </citation>
    <scope>NUCLEOTIDE SEQUENCE [LARGE SCALE GENOMIC DNA]</scope>
    <source>
        <strain>N315</strain>
    </source>
</reference>
<reference key="2">
    <citation type="journal article" date="2005" name="J. Microbiol. Methods">
        <title>Correlation of proteomic and transcriptomic profiles of Staphylococcus aureus during the post-exponential phase of growth.</title>
        <authorList>
            <person name="Scherl A."/>
            <person name="Francois P."/>
            <person name="Bento M."/>
            <person name="Deshusses J.M."/>
            <person name="Charbonnier Y."/>
            <person name="Converset V."/>
            <person name="Huyghe A."/>
            <person name="Walter N."/>
            <person name="Hoogland C."/>
            <person name="Appel R.D."/>
            <person name="Sanchez J.-C."/>
            <person name="Zimmermann-Ivol C.G."/>
            <person name="Corthals G.L."/>
            <person name="Hochstrasser D.F."/>
            <person name="Schrenzel J."/>
        </authorList>
    </citation>
    <scope>IDENTIFICATION BY MASS SPECTROMETRY</scope>
    <source>
        <strain>N315</strain>
    </source>
</reference>
<reference key="3">
    <citation type="submission" date="2007-10" db="UniProtKB">
        <title>Shotgun proteomic analysis of total and membrane protein extracts of S. aureus strain N315.</title>
        <authorList>
            <person name="Vaezzadeh A.R."/>
            <person name="Deshusses J."/>
            <person name="Lescuyer P."/>
            <person name="Hochstrasser D.F."/>
        </authorList>
    </citation>
    <scope>IDENTIFICATION BY MASS SPECTROMETRY [LARGE SCALE ANALYSIS]</scope>
    <source>
        <strain>N315</strain>
    </source>
</reference>
<dbReference type="EC" id="6.3.5.2" evidence="1"/>
<dbReference type="EMBL" id="BA000018">
    <property type="protein sequence ID" value="BAB41603.1"/>
    <property type="molecule type" value="Genomic_DNA"/>
</dbReference>
<dbReference type="PIR" id="H89805">
    <property type="entry name" value="H89805"/>
</dbReference>
<dbReference type="RefSeq" id="WP_000424963.1">
    <property type="nucleotide sequence ID" value="NC_002745.2"/>
</dbReference>
<dbReference type="SMR" id="P99105"/>
<dbReference type="MEROPS" id="C26.957"/>
<dbReference type="EnsemblBacteria" id="BAB41603">
    <property type="protein sequence ID" value="BAB41603"/>
    <property type="gene ID" value="BAB41603"/>
</dbReference>
<dbReference type="GeneID" id="98344714"/>
<dbReference type="KEGG" id="sau:SA0376"/>
<dbReference type="HOGENOM" id="CLU_014340_0_5_9"/>
<dbReference type="UniPathway" id="UPA00189">
    <property type="reaction ID" value="UER00296"/>
</dbReference>
<dbReference type="GO" id="GO:0005829">
    <property type="term" value="C:cytosol"/>
    <property type="evidence" value="ECO:0007669"/>
    <property type="project" value="TreeGrafter"/>
</dbReference>
<dbReference type="GO" id="GO:0005524">
    <property type="term" value="F:ATP binding"/>
    <property type="evidence" value="ECO:0007669"/>
    <property type="project" value="UniProtKB-UniRule"/>
</dbReference>
<dbReference type="GO" id="GO:0003921">
    <property type="term" value="F:GMP synthase activity"/>
    <property type="evidence" value="ECO:0007669"/>
    <property type="project" value="InterPro"/>
</dbReference>
<dbReference type="CDD" id="cd01742">
    <property type="entry name" value="GATase1_GMP_Synthase"/>
    <property type="match status" value="1"/>
</dbReference>
<dbReference type="CDD" id="cd01997">
    <property type="entry name" value="GMP_synthase_C"/>
    <property type="match status" value="1"/>
</dbReference>
<dbReference type="FunFam" id="3.30.300.10:FF:000002">
    <property type="entry name" value="GMP synthase [glutamine-hydrolyzing]"/>
    <property type="match status" value="1"/>
</dbReference>
<dbReference type="FunFam" id="3.40.50.620:FF:000001">
    <property type="entry name" value="GMP synthase [glutamine-hydrolyzing]"/>
    <property type="match status" value="1"/>
</dbReference>
<dbReference type="FunFam" id="3.40.50.880:FF:000001">
    <property type="entry name" value="GMP synthase [glutamine-hydrolyzing]"/>
    <property type="match status" value="1"/>
</dbReference>
<dbReference type="Gene3D" id="3.30.300.10">
    <property type="match status" value="1"/>
</dbReference>
<dbReference type="Gene3D" id="3.40.50.880">
    <property type="match status" value="1"/>
</dbReference>
<dbReference type="Gene3D" id="3.40.50.620">
    <property type="entry name" value="HUPs"/>
    <property type="match status" value="1"/>
</dbReference>
<dbReference type="HAMAP" id="MF_00344">
    <property type="entry name" value="GMP_synthase"/>
    <property type="match status" value="1"/>
</dbReference>
<dbReference type="InterPro" id="IPR029062">
    <property type="entry name" value="Class_I_gatase-like"/>
</dbReference>
<dbReference type="InterPro" id="IPR017926">
    <property type="entry name" value="GATASE"/>
</dbReference>
<dbReference type="InterPro" id="IPR001674">
    <property type="entry name" value="GMP_synth_C"/>
</dbReference>
<dbReference type="InterPro" id="IPR004739">
    <property type="entry name" value="GMP_synth_GATase"/>
</dbReference>
<dbReference type="InterPro" id="IPR022955">
    <property type="entry name" value="GMP_synthase"/>
</dbReference>
<dbReference type="InterPro" id="IPR025777">
    <property type="entry name" value="GMPS_ATP_PPase_dom"/>
</dbReference>
<dbReference type="InterPro" id="IPR014729">
    <property type="entry name" value="Rossmann-like_a/b/a_fold"/>
</dbReference>
<dbReference type="NCBIfam" id="TIGR00884">
    <property type="entry name" value="guaA_Cterm"/>
    <property type="match status" value="1"/>
</dbReference>
<dbReference type="NCBIfam" id="TIGR00888">
    <property type="entry name" value="guaA_Nterm"/>
    <property type="match status" value="1"/>
</dbReference>
<dbReference type="NCBIfam" id="NF000848">
    <property type="entry name" value="PRK00074.1"/>
    <property type="match status" value="1"/>
</dbReference>
<dbReference type="PANTHER" id="PTHR11922:SF2">
    <property type="entry name" value="GMP SYNTHASE [GLUTAMINE-HYDROLYZING]"/>
    <property type="match status" value="1"/>
</dbReference>
<dbReference type="PANTHER" id="PTHR11922">
    <property type="entry name" value="GMP SYNTHASE-RELATED"/>
    <property type="match status" value="1"/>
</dbReference>
<dbReference type="Pfam" id="PF00117">
    <property type="entry name" value="GATase"/>
    <property type="match status" value="1"/>
</dbReference>
<dbReference type="Pfam" id="PF00958">
    <property type="entry name" value="GMP_synt_C"/>
    <property type="match status" value="1"/>
</dbReference>
<dbReference type="Pfam" id="PF03054">
    <property type="entry name" value="tRNA_Me_trans"/>
    <property type="match status" value="1"/>
</dbReference>
<dbReference type="PRINTS" id="PR00097">
    <property type="entry name" value="ANTSNTHASEII"/>
</dbReference>
<dbReference type="PRINTS" id="PR00099">
    <property type="entry name" value="CPSGATASE"/>
</dbReference>
<dbReference type="PRINTS" id="PR00096">
    <property type="entry name" value="GATASE"/>
</dbReference>
<dbReference type="SUPFAM" id="SSF52402">
    <property type="entry name" value="Adenine nucleotide alpha hydrolases-like"/>
    <property type="match status" value="1"/>
</dbReference>
<dbReference type="SUPFAM" id="SSF52317">
    <property type="entry name" value="Class I glutamine amidotransferase-like"/>
    <property type="match status" value="1"/>
</dbReference>
<dbReference type="SUPFAM" id="SSF54810">
    <property type="entry name" value="GMP synthetase C-terminal dimerisation domain"/>
    <property type="match status" value="1"/>
</dbReference>
<dbReference type="PROSITE" id="PS51273">
    <property type="entry name" value="GATASE_TYPE_1"/>
    <property type="match status" value="1"/>
</dbReference>
<dbReference type="PROSITE" id="PS51553">
    <property type="entry name" value="GMPS_ATP_PPASE"/>
    <property type="match status" value="1"/>
</dbReference>
<proteinExistence type="evidence at protein level"/>
<feature type="chain" id="PRO_0000140177" description="GMP synthase [glutamine-hydrolyzing]">
    <location>
        <begin position="1"/>
        <end position="513"/>
    </location>
</feature>
<feature type="domain" description="Glutamine amidotransferase type-1" evidence="1">
    <location>
        <begin position="9"/>
        <end position="198"/>
    </location>
</feature>
<feature type="domain" description="GMPS ATP-PPase" evidence="1">
    <location>
        <begin position="199"/>
        <end position="388"/>
    </location>
</feature>
<feature type="active site" description="Nucleophile" evidence="1">
    <location>
        <position position="86"/>
    </location>
</feature>
<feature type="active site" evidence="1">
    <location>
        <position position="172"/>
    </location>
</feature>
<feature type="active site" evidence="1">
    <location>
        <position position="174"/>
    </location>
</feature>
<feature type="binding site" evidence="1">
    <location>
        <begin position="226"/>
        <end position="232"/>
    </location>
    <ligand>
        <name>ATP</name>
        <dbReference type="ChEBI" id="CHEBI:30616"/>
    </ligand>
</feature>
<sequence>MEMAKEQELILVLDFGSQYNQLITRRIREMGVYSELHDHEISIEEIKKMNPKGIILSGGPNSVYEEGSFTIDPEIYNLGIPVLGICYGMQLTTKLLGGKVERANEREYGKAIINAKSDELFAGLPAEQTVWMSHSDKVIEIPEGFEVIADSPSTDYAAIEDKKRRIYGVQFHPEVRHTEYGNDLLNNFVRRVCDCKGQWTMENFIEIEIEKIRQRVGDRRVLCAMSGGVDSSVVAVLLHKAIGDQLTCIFVDHGLLRKGEGDMVMEQFGEGFNMNIIRVNAKDRFMNKLKGVSDPEQKRKIIGNEFVYVFDDEASKLKGVDFLAQGTLYTDVIESGTKTAQTIKSHHNVGGLPEDMEFELIEPINTLFKDEVRKLGIELGIPEHLVWRQPFPGPGLGIRVLGEITEDKLEIVRESDAILRQVIREEGLEREIWQYFTVLPNIQSVGVMGDYRTYDHTVGIRAVTSIDGMTSDFARIDWEVLQKISSRIVNEVDHVNRVVYDITSKPPSTIEWE</sequence>
<gene>
    <name evidence="1" type="primary">guaA</name>
    <name type="ordered locus">SA0376</name>
</gene>
<organism>
    <name type="scientific">Staphylococcus aureus (strain N315)</name>
    <dbReference type="NCBI Taxonomy" id="158879"/>
    <lineage>
        <taxon>Bacteria</taxon>
        <taxon>Bacillati</taxon>
        <taxon>Bacillota</taxon>
        <taxon>Bacilli</taxon>
        <taxon>Bacillales</taxon>
        <taxon>Staphylococcaceae</taxon>
        <taxon>Staphylococcus</taxon>
    </lineage>
</organism>